<comment type="function">
    <text>Hydrolyzes a variety of proteins.</text>
</comment>
<comment type="catalytic activity">
    <reaction>
        <text>More restricted specificity than pepsin A, but shows preferential cleavage at Tyr-|-Xaa bonds. High activity on hemoglobin.</text>
        <dbReference type="EC" id="3.4.23.3"/>
    </reaction>
</comment>
<comment type="subcellular location">
    <subcellularLocation>
        <location>Secreted</location>
    </subcellularLocation>
</comment>
<comment type="similarity">
    <text evidence="5">Belongs to the peptidase A1 family.</text>
</comment>
<comment type="sequence caution" evidence="5">
    <conflict type="frameshift">
        <sequence resource="EMBL-CDS" id="BAB25952"/>
    </conflict>
</comment>
<sequence length="392" mass="42849">MKWMVVALLCLPLLEAALIRVPLKKMKSIRETMKEQGVLKDFLKNHKYDPGQKYHFGKFGDYSVLYEPMAYMDASYYGEISIGTPPQNFLVLFDTGSSNLWVSSVYCQSEACTTHTRYNPSKSSTYYTQGQTFSLQYGTGSLTGFFGYDTLRVQSIQVPNQEFGLSENEPGTNFVYAQFDGIMGLAYPGLSSGGATTALQGMLGEGALSQPLFGVYLGSQQGSNGGQIVFGGVDENLYTGELTWIPVTQELYWQITIDDFLIGNQASGWCSSSGCQGIVDTGTSLLVMPAQYLNELLQTIGAQEGEYGQYFVSCDSVSSLPTLTFVLNGVQFPLSPSSYIIQEEGSCMVGLESLSLNAESGQPLWILGDVFLRSYYAVFDMGNNRVGLAPSV</sequence>
<feature type="signal peptide" evidence="2">
    <location>
        <begin position="1"/>
        <end position="16"/>
    </location>
</feature>
<feature type="propeptide" id="PRO_0000026063" description="Activation peptide" evidence="1">
    <location>
        <begin position="17"/>
        <end position="62"/>
    </location>
</feature>
<feature type="chain" id="PRO_0000026064" description="Gastricsin">
    <location>
        <begin position="63"/>
        <end position="392"/>
    </location>
</feature>
<feature type="domain" description="Peptidase A1" evidence="3">
    <location>
        <begin position="76"/>
        <end position="389"/>
    </location>
</feature>
<feature type="active site" evidence="4">
    <location>
        <position position="94"/>
    </location>
</feature>
<feature type="active site" evidence="4">
    <location>
        <position position="280"/>
    </location>
</feature>
<feature type="disulfide bond" evidence="1">
    <location>
        <begin position="107"/>
        <end position="112"/>
    </location>
</feature>
<feature type="disulfide bond" evidence="1">
    <location>
        <begin position="270"/>
        <end position="275"/>
    </location>
</feature>
<feature type="disulfide bond" evidence="1">
    <location>
        <begin position="314"/>
        <end position="347"/>
    </location>
</feature>
<keyword id="KW-0064">Aspartyl protease</keyword>
<keyword id="KW-0222">Digestion</keyword>
<keyword id="KW-1015">Disulfide bond</keyword>
<keyword id="KW-0378">Hydrolase</keyword>
<keyword id="KW-0645">Protease</keyword>
<keyword id="KW-1185">Reference proteome</keyword>
<keyword id="KW-0964">Secreted</keyword>
<keyword id="KW-0732">Signal</keyword>
<keyword id="KW-0865">Zymogen</keyword>
<reference key="1">
    <citation type="journal article" date="2005" name="Science">
        <title>The transcriptional landscape of the mammalian genome.</title>
        <authorList>
            <person name="Carninci P."/>
            <person name="Kasukawa T."/>
            <person name="Katayama S."/>
            <person name="Gough J."/>
            <person name="Frith M.C."/>
            <person name="Maeda N."/>
            <person name="Oyama R."/>
            <person name="Ravasi T."/>
            <person name="Lenhard B."/>
            <person name="Wells C."/>
            <person name="Kodzius R."/>
            <person name="Shimokawa K."/>
            <person name="Bajic V.B."/>
            <person name="Brenner S.E."/>
            <person name="Batalov S."/>
            <person name="Forrest A.R."/>
            <person name="Zavolan M."/>
            <person name="Davis M.J."/>
            <person name="Wilming L.G."/>
            <person name="Aidinis V."/>
            <person name="Allen J.E."/>
            <person name="Ambesi-Impiombato A."/>
            <person name="Apweiler R."/>
            <person name="Aturaliya R.N."/>
            <person name="Bailey T.L."/>
            <person name="Bansal M."/>
            <person name="Baxter L."/>
            <person name="Beisel K.W."/>
            <person name="Bersano T."/>
            <person name="Bono H."/>
            <person name="Chalk A.M."/>
            <person name="Chiu K.P."/>
            <person name="Choudhary V."/>
            <person name="Christoffels A."/>
            <person name="Clutterbuck D.R."/>
            <person name="Crowe M.L."/>
            <person name="Dalla E."/>
            <person name="Dalrymple B.P."/>
            <person name="de Bono B."/>
            <person name="Della Gatta G."/>
            <person name="di Bernardo D."/>
            <person name="Down T."/>
            <person name="Engstrom P."/>
            <person name="Fagiolini M."/>
            <person name="Faulkner G."/>
            <person name="Fletcher C.F."/>
            <person name="Fukushima T."/>
            <person name="Furuno M."/>
            <person name="Futaki S."/>
            <person name="Gariboldi M."/>
            <person name="Georgii-Hemming P."/>
            <person name="Gingeras T.R."/>
            <person name="Gojobori T."/>
            <person name="Green R.E."/>
            <person name="Gustincich S."/>
            <person name="Harbers M."/>
            <person name="Hayashi Y."/>
            <person name="Hensch T.K."/>
            <person name="Hirokawa N."/>
            <person name="Hill D."/>
            <person name="Huminiecki L."/>
            <person name="Iacono M."/>
            <person name="Ikeo K."/>
            <person name="Iwama A."/>
            <person name="Ishikawa T."/>
            <person name="Jakt M."/>
            <person name="Kanapin A."/>
            <person name="Katoh M."/>
            <person name="Kawasawa Y."/>
            <person name="Kelso J."/>
            <person name="Kitamura H."/>
            <person name="Kitano H."/>
            <person name="Kollias G."/>
            <person name="Krishnan S.P."/>
            <person name="Kruger A."/>
            <person name="Kummerfeld S.K."/>
            <person name="Kurochkin I.V."/>
            <person name="Lareau L.F."/>
            <person name="Lazarevic D."/>
            <person name="Lipovich L."/>
            <person name="Liu J."/>
            <person name="Liuni S."/>
            <person name="McWilliam S."/>
            <person name="Madan Babu M."/>
            <person name="Madera M."/>
            <person name="Marchionni L."/>
            <person name="Matsuda H."/>
            <person name="Matsuzawa S."/>
            <person name="Miki H."/>
            <person name="Mignone F."/>
            <person name="Miyake S."/>
            <person name="Morris K."/>
            <person name="Mottagui-Tabar S."/>
            <person name="Mulder N."/>
            <person name="Nakano N."/>
            <person name="Nakauchi H."/>
            <person name="Ng P."/>
            <person name="Nilsson R."/>
            <person name="Nishiguchi S."/>
            <person name="Nishikawa S."/>
            <person name="Nori F."/>
            <person name="Ohara O."/>
            <person name="Okazaki Y."/>
            <person name="Orlando V."/>
            <person name="Pang K.C."/>
            <person name="Pavan W.J."/>
            <person name="Pavesi G."/>
            <person name="Pesole G."/>
            <person name="Petrovsky N."/>
            <person name="Piazza S."/>
            <person name="Reed J."/>
            <person name="Reid J.F."/>
            <person name="Ring B.Z."/>
            <person name="Ringwald M."/>
            <person name="Rost B."/>
            <person name="Ruan Y."/>
            <person name="Salzberg S.L."/>
            <person name="Sandelin A."/>
            <person name="Schneider C."/>
            <person name="Schoenbach C."/>
            <person name="Sekiguchi K."/>
            <person name="Semple C.A."/>
            <person name="Seno S."/>
            <person name="Sessa L."/>
            <person name="Sheng Y."/>
            <person name="Shibata Y."/>
            <person name="Shimada H."/>
            <person name="Shimada K."/>
            <person name="Silva D."/>
            <person name="Sinclair B."/>
            <person name="Sperling S."/>
            <person name="Stupka E."/>
            <person name="Sugiura K."/>
            <person name="Sultana R."/>
            <person name="Takenaka Y."/>
            <person name="Taki K."/>
            <person name="Tammoja K."/>
            <person name="Tan S.L."/>
            <person name="Tang S."/>
            <person name="Taylor M.S."/>
            <person name="Tegner J."/>
            <person name="Teichmann S.A."/>
            <person name="Ueda H.R."/>
            <person name="van Nimwegen E."/>
            <person name="Verardo R."/>
            <person name="Wei C.L."/>
            <person name="Yagi K."/>
            <person name="Yamanishi H."/>
            <person name="Zabarovsky E."/>
            <person name="Zhu S."/>
            <person name="Zimmer A."/>
            <person name="Hide W."/>
            <person name="Bult C."/>
            <person name="Grimmond S.M."/>
            <person name="Teasdale R.D."/>
            <person name="Liu E.T."/>
            <person name="Brusic V."/>
            <person name="Quackenbush J."/>
            <person name="Wahlestedt C."/>
            <person name="Mattick J.S."/>
            <person name="Hume D.A."/>
            <person name="Kai C."/>
            <person name="Sasaki D."/>
            <person name="Tomaru Y."/>
            <person name="Fukuda S."/>
            <person name="Kanamori-Katayama M."/>
            <person name="Suzuki M."/>
            <person name="Aoki J."/>
            <person name="Arakawa T."/>
            <person name="Iida J."/>
            <person name="Imamura K."/>
            <person name="Itoh M."/>
            <person name="Kato T."/>
            <person name="Kawaji H."/>
            <person name="Kawagashira N."/>
            <person name="Kawashima T."/>
            <person name="Kojima M."/>
            <person name="Kondo S."/>
            <person name="Konno H."/>
            <person name="Nakano K."/>
            <person name="Ninomiya N."/>
            <person name="Nishio T."/>
            <person name="Okada M."/>
            <person name="Plessy C."/>
            <person name="Shibata K."/>
            <person name="Shiraki T."/>
            <person name="Suzuki S."/>
            <person name="Tagami M."/>
            <person name="Waki K."/>
            <person name="Watahiki A."/>
            <person name="Okamura-Oho Y."/>
            <person name="Suzuki H."/>
            <person name="Kawai J."/>
            <person name="Hayashizaki Y."/>
        </authorList>
    </citation>
    <scope>NUCLEOTIDE SEQUENCE [LARGE SCALE MRNA]</scope>
    <source>
        <strain>C57BL/6J</strain>
        <tissue>Stomach</tissue>
    </source>
</reference>
<reference key="2">
    <citation type="journal article" date="2004" name="Genome Res.">
        <title>The status, quality, and expansion of the NIH full-length cDNA project: the Mammalian Gene Collection (MGC).</title>
        <authorList>
            <consortium name="The MGC Project Team"/>
        </authorList>
    </citation>
    <scope>NUCLEOTIDE SEQUENCE [LARGE SCALE MRNA]</scope>
    <source>
        <tissue>Placenta</tissue>
    </source>
</reference>
<dbReference type="EC" id="3.4.23.3"/>
<dbReference type="EMBL" id="AK008959">
    <property type="protein sequence ID" value="BAB25990.1"/>
    <property type="molecule type" value="mRNA"/>
</dbReference>
<dbReference type="EMBL" id="AK008886">
    <property type="protein sequence ID" value="BAB25952.1"/>
    <property type="status" value="ALT_FRAME"/>
    <property type="molecule type" value="mRNA"/>
</dbReference>
<dbReference type="EMBL" id="BC099409">
    <property type="protein sequence ID" value="AAH99409.1"/>
    <property type="molecule type" value="mRNA"/>
</dbReference>
<dbReference type="CCDS" id="CCDS28855.1"/>
<dbReference type="RefSeq" id="NP_080249.2">
    <property type="nucleotide sequence ID" value="NM_025973.3"/>
</dbReference>
<dbReference type="SMR" id="Q9D7R7"/>
<dbReference type="FunCoup" id="Q9D7R7">
    <property type="interactions" value="113"/>
</dbReference>
<dbReference type="STRING" id="10090.ENSMUSP00000024782"/>
<dbReference type="MEROPS" id="A01.003"/>
<dbReference type="PhosphoSitePlus" id="Q9D7R7"/>
<dbReference type="PaxDb" id="10090-ENSMUSP00000024782"/>
<dbReference type="ProteomicsDB" id="287915"/>
<dbReference type="Antibodypedia" id="15914">
    <property type="antibodies" value="487 antibodies from 30 providers"/>
</dbReference>
<dbReference type="DNASU" id="109820"/>
<dbReference type="Ensembl" id="ENSMUST00000024782.12">
    <property type="protein sequence ID" value="ENSMUSP00000024782.6"/>
    <property type="gene ID" value="ENSMUSG00000023987.15"/>
</dbReference>
<dbReference type="GeneID" id="109820"/>
<dbReference type="KEGG" id="mmu:109820"/>
<dbReference type="UCSC" id="uc008cwb.1">
    <property type="organism name" value="mouse"/>
</dbReference>
<dbReference type="AGR" id="MGI:98909"/>
<dbReference type="CTD" id="5225"/>
<dbReference type="MGI" id="MGI:98909">
    <property type="gene designation" value="Pgc"/>
</dbReference>
<dbReference type="VEuPathDB" id="HostDB:ENSMUSG00000023987"/>
<dbReference type="eggNOG" id="KOG1339">
    <property type="taxonomic scope" value="Eukaryota"/>
</dbReference>
<dbReference type="GeneTree" id="ENSGT00940000160626"/>
<dbReference type="HOGENOM" id="CLU_013253_3_0_1"/>
<dbReference type="InParanoid" id="Q9D7R7"/>
<dbReference type="OMA" id="YSGEIYW"/>
<dbReference type="OrthoDB" id="771136at2759"/>
<dbReference type="PhylomeDB" id="Q9D7R7"/>
<dbReference type="TreeFam" id="TF314990"/>
<dbReference type="BioGRID-ORCS" id="109820">
    <property type="hits" value="2 hits in 79 CRISPR screens"/>
</dbReference>
<dbReference type="ChiTaRS" id="Pgc">
    <property type="organism name" value="mouse"/>
</dbReference>
<dbReference type="PRO" id="PR:Q9D7R7"/>
<dbReference type="Proteomes" id="UP000000589">
    <property type="component" value="Chromosome 17"/>
</dbReference>
<dbReference type="RNAct" id="Q9D7R7">
    <property type="molecule type" value="protein"/>
</dbReference>
<dbReference type="Bgee" id="ENSMUSG00000023987">
    <property type="expression patterns" value="Expressed in pyloric antrum and 35 other cell types or tissues"/>
</dbReference>
<dbReference type="ExpressionAtlas" id="Q9D7R7">
    <property type="expression patterns" value="baseline and differential"/>
</dbReference>
<dbReference type="GO" id="GO:0005615">
    <property type="term" value="C:extracellular space"/>
    <property type="evidence" value="ECO:0007669"/>
    <property type="project" value="Ensembl"/>
</dbReference>
<dbReference type="GO" id="GO:0004190">
    <property type="term" value="F:aspartic-type endopeptidase activity"/>
    <property type="evidence" value="ECO:0007669"/>
    <property type="project" value="UniProtKB-KW"/>
</dbReference>
<dbReference type="GO" id="GO:0007586">
    <property type="term" value="P:digestion"/>
    <property type="evidence" value="ECO:0007669"/>
    <property type="project" value="UniProtKB-KW"/>
</dbReference>
<dbReference type="GO" id="GO:0002803">
    <property type="term" value="P:positive regulation of antibacterial peptide production"/>
    <property type="evidence" value="ECO:0007669"/>
    <property type="project" value="Ensembl"/>
</dbReference>
<dbReference type="GO" id="GO:0006508">
    <property type="term" value="P:proteolysis"/>
    <property type="evidence" value="ECO:0007669"/>
    <property type="project" value="UniProtKB-KW"/>
</dbReference>
<dbReference type="FunFam" id="2.40.70.10:FF:000006">
    <property type="entry name" value="Cathepsin E"/>
    <property type="match status" value="1"/>
</dbReference>
<dbReference type="FunFam" id="2.40.70.10:FF:000004">
    <property type="entry name" value="Pepsin A"/>
    <property type="match status" value="1"/>
</dbReference>
<dbReference type="Gene3D" id="6.10.140.60">
    <property type="match status" value="1"/>
</dbReference>
<dbReference type="Gene3D" id="2.40.70.10">
    <property type="entry name" value="Acid Proteases"/>
    <property type="match status" value="2"/>
</dbReference>
<dbReference type="InterPro" id="IPR001461">
    <property type="entry name" value="Aspartic_peptidase_A1"/>
</dbReference>
<dbReference type="InterPro" id="IPR001969">
    <property type="entry name" value="Aspartic_peptidase_AS"/>
</dbReference>
<dbReference type="InterPro" id="IPR012848">
    <property type="entry name" value="Aspartic_peptidase_N"/>
</dbReference>
<dbReference type="InterPro" id="IPR033121">
    <property type="entry name" value="PEPTIDASE_A1"/>
</dbReference>
<dbReference type="InterPro" id="IPR021109">
    <property type="entry name" value="Peptidase_aspartic_dom_sf"/>
</dbReference>
<dbReference type="PANTHER" id="PTHR47966">
    <property type="entry name" value="BETA-SITE APP-CLEAVING ENZYME, ISOFORM A-RELATED"/>
    <property type="match status" value="1"/>
</dbReference>
<dbReference type="PANTHER" id="PTHR47966:SF72">
    <property type="entry name" value="GASTRICSIN"/>
    <property type="match status" value="1"/>
</dbReference>
<dbReference type="Pfam" id="PF07966">
    <property type="entry name" value="A1_Propeptide"/>
    <property type="match status" value="1"/>
</dbReference>
<dbReference type="Pfam" id="PF00026">
    <property type="entry name" value="Asp"/>
    <property type="match status" value="1"/>
</dbReference>
<dbReference type="PRINTS" id="PR00792">
    <property type="entry name" value="PEPSIN"/>
</dbReference>
<dbReference type="SUPFAM" id="SSF50630">
    <property type="entry name" value="Acid proteases"/>
    <property type="match status" value="1"/>
</dbReference>
<dbReference type="PROSITE" id="PS00141">
    <property type="entry name" value="ASP_PROTEASE"/>
    <property type="match status" value="2"/>
</dbReference>
<dbReference type="PROSITE" id="PS51767">
    <property type="entry name" value="PEPTIDASE_A1"/>
    <property type="match status" value="1"/>
</dbReference>
<protein>
    <recommendedName>
        <fullName>Gastricsin</fullName>
        <ecNumber>3.4.23.3</ecNumber>
    </recommendedName>
    <alternativeName>
        <fullName>Pepsinogen C</fullName>
    </alternativeName>
</protein>
<proteinExistence type="evidence at transcript level"/>
<gene>
    <name type="primary">Pgc</name>
    <name type="synonym">Upg1</name>
</gene>
<accession>Q9D7R7</accession>
<accession>Q9D7T2</accession>
<organism>
    <name type="scientific">Mus musculus</name>
    <name type="common">Mouse</name>
    <dbReference type="NCBI Taxonomy" id="10090"/>
    <lineage>
        <taxon>Eukaryota</taxon>
        <taxon>Metazoa</taxon>
        <taxon>Chordata</taxon>
        <taxon>Craniata</taxon>
        <taxon>Vertebrata</taxon>
        <taxon>Euteleostomi</taxon>
        <taxon>Mammalia</taxon>
        <taxon>Eutheria</taxon>
        <taxon>Euarchontoglires</taxon>
        <taxon>Glires</taxon>
        <taxon>Rodentia</taxon>
        <taxon>Myomorpha</taxon>
        <taxon>Muroidea</taxon>
        <taxon>Muridae</taxon>
        <taxon>Murinae</taxon>
        <taxon>Mus</taxon>
        <taxon>Mus</taxon>
    </lineage>
</organism>
<evidence type="ECO:0000250" key="1"/>
<evidence type="ECO:0000255" key="2"/>
<evidence type="ECO:0000255" key="3">
    <source>
        <dbReference type="PROSITE-ProRule" id="PRU01103"/>
    </source>
</evidence>
<evidence type="ECO:0000255" key="4">
    <source>
        <dbReference type="PROSITE-ProRule" id="PRU10094"/>
    </source>
</evidence>
<evidence type="ECO:0000305" key="5"/>
<name>PEPC_MOUSE</name>